<reference key="1">
    <citation type="submission" date="2004-11" db="EMBL/GenBank/DDBJ databases">
        <authorList>
            <consortium name="The German cDNA consortium"/>
        </authorList>
    </citation>
    <scope>NUCLEOTIDE SEQUENCE [LARGE SCALE MRNA]</scope>
    <source>
        <tissue>Kidney</tissue>
    </source>
</reference>
<feature type="chain" id="PRO_0000312415" description="Ubl carboxyl-terminal hydrolase 18">
    <location>
        <begin position="1"/>
        <end position="375"/>
    </location>
</feature>
<feature type="domain" description="USP">
    <location>
        <begin position="55"/>
        <end position="373"/>
    </location>
</feature>
<feature type="region of interest" description="Disordered" evidence="4">
    <location>
        <begin position="18"/>
        <end position="45"/>
    </location>
</feature>
<feature type="compositionally biased region" description="Basic and acidic residues" evidence="4">
    <location>
        <begin position="26"/>
        <end position="45"/>
    </location>
</feature>
<feature type="active site" description="Nucleophile" evidence="2 3">
    <location>
        <position position="64"/>
    </location>
</feature>
<feature type="active site" description="Proton acceptor" evidence="2 3">
    <location>
        <position position="321"/>
    </location>
</feature>
<name>UBP18_PONAB</name>
<gene>
    <name type="primary">USP18</name>
</gene>
<proteinExistence type="evidence at transcript level"/>
<dbReference type="EC" id="3.4.19.12" evidence="1"/>
<dbReference type="EMBL" id="CR857674">
    <property type="protein sequence ID" value="CAH89944.1"/>
    <property type="molecule type" value="mRNA"/>
</dbReference>
<dbReference type="RefSeq" id="NP_001124911.1">
    <property type="nucleotide sequence ID" value="NM_001131439.2"/>
</dbReference>
<dbReference type="SMR" id="Q5RE63"/>
<dbReference type="FunCoup" id="Q5RE63">
    <property type="interactions" value="1464"/>
</dbReference>
<dbReference type="STRING" id="9601.ENSPPYP00000022342"/>
<dbReference type="MEROPS" id="C19.030"/>
<dbReference type="GeneID" id="100171781"/>
<dbReference type="KEGG" id="pon:100171781"/>
<dbReference type="CTD" id="11274"/>
<dbReference type="eggNOG" id="KOG1863">
    <property type="taxonomic scope" value="Eukaryota"/>
</dbReference>
<dbReference type="InParanoid" id="Q5RE63"/>
<dbReference type="OrthoDB" id="292964at2759"/>
<dbReference type="Proteomes" id="UP000001595">
    <property type="component" value="Unplaced"/>
</dbReference>
<dbReference type="GO" id="GO:0005829">
    <property type="term" value="C:cytosol"/>
    <property type="evidence" value="ECO:0007669"/>
    <property type="project" value="TreeGrafter"/>
</dbReference>
<dbReference type="GO" id="GO:0005634">
    <property type="term" value="C:nucleus"/>
    <property type="evidence" value="ECO:0007669"/>
    <property type="project" value="TreeGrafter"/>
</dbReference>
<dbReference type="GO" id="GO:0004843">
    <property type="term" value="F:cysteine-type deubiquitinase activity"/>
    <property type="evidence" value="ECO:0007669"/>
    <property type="project" value="InterPro"/>
</dbReference>
<dbReference type="GO" id="GO:0016579">
    <property type="term" value="P:protein deubiquitination"/>
    <property type="evidence" value="ECO:0007669"/>
    <property type="project" value="InterPro"/>
</dbReference>
<dbReference type="GO" id="GO:0006508">
    <property type="term" value="P:proteolysis"/>
    <property type="evidence" value="ECO:0007669"/>
    <property type="project" value="UniProtKB-KW"/>
</dbReference>
<dbReference type="GO" id="GO:0050727">
    <property type="term" value="P:regulation of inflammatory response"/>
    <property type="evidence" value="ECO:0000250"/>
    <property type="project" value="UniProtKB"/>
</dbReference>
<dbReference type="FunFam" id="3.90.70.10:FF:000088">
    <property type="entry name" value="Ubl carboxyl-terminal hydrolase 18"/>
    <property type="match status" value="1"/>
</dbReference>
<dbReference type="Gene3D" id="3.90.70.10">
    <property type="entry name" value="Cysteine proteinases"/>
    <property type="match status" value="1"/>
</dbReference>
<dbReference type="InterPro" id="IPR038765">
    <property type="entry name" value="Papain-like_cys_pep_sf"/>
</dbReference>
<dbReference type="InterPro" id="IPR050164">
    <property type="entry name" value="Peptidase_C19"/>
</dbReference>
<dbReference type="InterPro" id="IPR001394">
    <property type="entry name" value="Peptidase_C19_UCH"/>
</dbReference>
<dbReference type="InterPro" id="IPR018200">
    <property type="entry name" value="USP_CS"/>
</dbReference>
<dbReference type="InterPro" id="IPR028889">
    <property type="entry name" value="USP_dom"/>
</dbReference>
<dbReference type="PANTHER" id="PTHR24006">
    <property type="entry name" value="UBIQUITIN CARBOXYL-TERMINAL HYDROLASE"/>
    <property type="match status" value="1"/>
</dbReference>
<dbReference type="PANTHER" id="PTHR24006:SF796">
    <property type="entry name" value="UBL CARBOXYL-TERMINAL HYDROLASE 18-RELATED"/>
    <property type="match status" value="1"/>
</dbReference>
<dbReference type="Pfam" id="PF00443">
    <property type="entry name" value="UCH"/>
    <property type="match status" value="1"/>
</dbReference>
<dbReference type="SUPFAM" id="SSF54001">
    <property type="entry name" value="Cysteine proteinases"/>
    <property type="match status" value="1"/>
</dbReference>
<dbReference type="PROSITE" id="PS00972">
    <property type="entry name" value="USP_1"/>
    <property type="match status" value="1"/>
</dbReference>
<dbReference type="PROSITE" id="PS00973">
    <property type="entry name" value="USP_2"/>
    <property type="match status" value="1"/>
</dbReference>
<dbReference type="PROSITE" id="PS50235">
    <property type="entry name" value="USP_3"/>
    <property type="match status" value="1"/>
</dbReference>
<sequence>MSKAFGLLRQTCQSILAESPQSPADLEEKKEEDSNMKREQPRERPRAWDYPHGLVGLHNIGQTCCLNSLIQVFVMNVDFARILKRITVPRGADEQRRSVPFQMLLLLEKMQDSRQKAVRPLELAYCLQKYNVPLFVQHDAAQLYLKLWNLMKDQITDVHLVERLQALYMIRMKDSLICLDCAMESSRNSSMLTLPLSLFDVDSKPLKTLVGQEDALHCFFQPRELSRKSKCFCENCGKKTHRKQVLKLTHFPQTLTIHLMRFSIRNSQTRKICHSLYFPQSLDFSQVLPTKQKSCDAEEQPGGQFELFAVIAHVGMADSGHYCVYIRNAVDGKWFCFNDSNICLVSWEDIQCTYGNPNYHWQETAYLLVYMKMEC</sequence>
<keyword id="KW-0378">Hydrolase</keyword>
<keyword id="KW-0645">Protease</keyword>
<keyword id="KW-1185">Reference proteome</keyword>
<keyword id="KW-0788">Thiol protease</keyword>
<keyword id="KW-0833">Ubl conjugation pathway</keyword>
<organism>
    <name type="scientific">Pongo abelii</name>
    <name type="common">Sumatran orangutan</name>
    <name type="synonym">Pongo pygmaeus abelii</name>
    <dbReference type="NCBI Taxonomy" id="9601"/>
    <lineage>
        <taxon>Eukaryota</taxon>
        <taxon>Metazoa</taxon>
        <taxon>Chordata</taxon>
        <taxon>Craniata</taxon>
        <taxon>Vertebrata</taxon>
        <taxon>Euteleostomi</taxon>
        <taxon>Mammalia</taxon>
        <taxon>Eutheria</taxon>
        <taxon>Euarchontoglires</taxon>
        <taxon>Primates</taxon>
        <taxon>Haplorrhini</taxon>
        <taxon>Catarrhini</taxon>
        <taxon>Hominidae</taxon>
        <taxon>Pongo</taxon>
    </lineage>
</organism>
<accession>Q5RE63</accession>
<comment type="function">
    <text evidence="1">Interferon-induced ISG15-specific protease that plays a crucial role for maintaining a proper balance of ISG15-conjugated proteins in cells. Regulates protein ISGylation by efficiently cleaving ISG15 conjugates linked via isopeptide bonds. Regulates T-cell activation and T-helper 17 (Th17) cell differentiation by deubiquitinating TAK1, likely to keep TAK1-TAB complexes in steady conditions. In turn, restricts activation of NF-kappa-B, NFAT, and JNK as well as expression of IL2 in T-cells after TCR activation. Acts as a molecular adapter with USP20 to promote innate antiviral response through deubiquitinating STING1. Involved also in the negative regulation of the inflammatory response triggered by type I interferon. Upon recruitment by STAT2 to the type I interferon receptor subunit IFNAR2 interferes with the assembly of the ternary interferon-IFNAR1-IFNAR2 complex and acts as a negative regulator of the type I interferon signaling pathway.</text>
</comment>
<comment type="catalytic activity">
    <reaction evidence="1">
        <text>Thiol-dependent hydrolysis of ester, thioester, amide, peptide and isopeptide bonds formed by the C-terminal Gly of ubiquitin (a 76-residue protein attached to proteins as an intracellular targeting signal).</text>
        <dbReference type="EC" id="3.4.19.12"/>
    </reaction>
</comment>
<comment type="subunit">
    <text evidence="1">Interacts with STAT2; the interaction is direct. Interacts with IFNAR2; indirectly via STAT2, it negatively regulates the assembly of the ternary interferon-IFNAR1-IFNAR2 complex and inhibits type I interferon signaling. Interacts with STING1. Interacts with USP20.</text>
</comment>
<comment type="similarity">
    <text evidence="5">Belongs to the peptidase C19 family.</text>
</comment>
<evidence type="ECO:0000250" key="1">
    <source>
        <dbReference type="UniProtKB" id="Q9UMW8"/>
    </source>
</evidence>
<evidence type="ECO:0000255" key="2">
    <source>
        <dbReference type="PROSITE-ProRule" id="PRU10092"/>
    </source>
</evidence>
<evidence type="ECO:0000255" key="3">
    <source>
        <dbReference type="PROSITE-ProRule" id="PRU10093"/>
    </source>
</evidence>
<evidence type="ECO:0000256" key="4">
    <source>
        <dbReference type="SAM" id="MobiDB-lite"/>
    </source>
</evidence>
<evidence type="ECO:0000305" key="5"/>
<protein>
    <recommendedName>
        <fullName>Ubl carboxyl-terminal hydrolase 18</fullName>
        <ecNumber evidence="1">3.4.19.12</ecNumber>
    </recommendedName>
    <alternativeName>
        <fullName>ISG15-specific-processing protease</fullName>
    </alternativeName>
    <alternativeName>
        <fullName>Ubl thioesterase 18</fullName>
    </alternativeName>
</protein>